<dbReference type="EMBL" id="CP000087">
    <property type="protein sequence ID" value="ABE05468.1"/>
    <property type="molecule type" value="Genomic_DNA"/>
</dbReference>
<dbReference type="RefSeq" id="WP_011478037.1">
    <property type="nucleotide sequence ID" value="NC_007940.1"/>
</dbReference>
<dbReference type="SMR" id="Q1RGP6"/>
<dbReference type="KEGG" id="rbe:RBE_1387"/>
<dbReference type="eggNOG" id="COG0323">
    <property type="taxonomic scope" value="Bacteria"/>
</dbReference>
<dbReference type="HOGENOM" id="CLU_004131_4_2_5"/>
<dbReference type="OrthoDB" id="9763467at2"/>
<dbReference type="Proteomes" id="UP000001951">
    <property type="component" value="Chromosome"/>
</dbReference>
<dbReference type="GO" id="GO:0032300">
    <property type="term" value="C:mismatch repair complex"/>
    <property type="evidence" value="ECO:0007669"/>
    <property type="project" value="InterPro"/>
</dbReference>
<dbReference type="GO" id="GO:0005524">
    <property type="term" value="F:ATP binding"/>
    <property type="evidence" value="ECO:0007669"/>
    <property type="project" value="InterPro"/>
</dbReference>
<dbReference type="GO" id="GO:0016887">
    <property type="term" value="F:ATP hydrolysis activity"/>
    <property type="evidence" value="ECO:0007669"/>
    <property type="project" value="InterPro"/>
</dbReference>
<dbReference type="GO" id="GO:0140664">
    <property type="term" value="F:ATP-dependent DNA damage sensor activity"/>
    <property type="evidence" value="ECO:0007669"/>
    <property type="project" value="InterPro"/>
</dbReference>
<dbReference type="GO" id="GO:0030983">
    <property type="term" value="F:mismatched DNA binding"/>
    <property type="evidence" value="ECO:0007669"/>
    <property type="project" value="InterPro"/>
</dbReference>
<dbReference type="GO" id="GO:0006298">
    <property type="term" value="P:mismatch repair"/>
    <property type="evidence" value="ECO:0007669"/>
    <property type="project" value="UniProtKB-UniRule"/>
</dbReference>
<dbReference type="CDD" id="cd16926">
    <property type="entry name" value="HATPase_MutL-MLH-PMS-like"/>
    <property type="match status" value="1"/>
</dbReference>
<dbReference type="CDD" id="cd00782">
    <property type="entry name" value="MutL_Trans"/>
    <property type="match status" value="1"/>
</dbReference>
<dbReference type="FunFam" id="3.30.565.10:FF:000003">
    <property type="entry name" value="DNA mismatch repair endonuclease MutL"/>
    <property type="match status" value="1"/>
</dbReference>
<dbReference type="Gene3D" id="3.30.230.10">
    <property type="match status" value="1"/>
</dbReference>
<dbReference type="Gene3D" id="3.30.565.10">
    <property type="entry name" value="Histidine kinase-like ATPase, C-terminal domain"/>
    <property type="match status" value="1"/>
</dbReference>
<dbReference type="Gene3D" id="3.30.1540.20">
    <property type="entry name" value="MutL, C-terminal domain, dimerisation subdomain"/>
    <property type="match status" value="1"/>
</dbReference>
<dbReference type="Gene3D" id="3.30.1370.100">
    <property type="entry name" value="MutL, C-terminal domain, regulatory subdomain"/>
    <property type="match status" value="1"/>
</dbReference>
<dbReference type="HAMAP" id="MF_00149">
    <property type="entry name" value="DNA_mis_repair"/>
    <property type="match status" value="1"/>
</dbReference>
<dbReference type="InterPro" id="IPR014762">
    <property type="entry name" value="DNA_mismatch_repair_CS"/>
</dbReference>
<dbReference type="InterPro" id="IPR020667">
    <property type="entry name" value="DNA_mismatch_repair_MutL"/>
</dbReference>
<dbReference type="InterPro" id="IPR013507">
    <property type="entry name" value="DNA_mismatch_S5_2-like"/>
</dbReference>
<dbReference type="InterPro" id="IPR036890">
    <property type="entry name" value="HATPase_C_sf"/>
</dbReference>
<dbReference type="InterPro" id="IPR002099">
    <property type="entry name" value="MutL/Mlh/PMS"/>
</dbReference>
<dbReference type="InterPro" id="IPR038973">
    <property type="entry name" value="MutL/Mlh/Pms-like"/>
</dbReference>
<dbReference type="InterPro" id="IPR014790">
    <property type="entry name" value="MutL_C"/>
</dbReference>
<dbReference type="InterPro" id="IPR042120">
    <property type="entry name" value="MutL_C_dimsub"/>
</dbReference>
<dbReference type="InterPro" id="IPR042121">
    <property type="entry name" value="MutL_C_regsub"/>
</dbReference>
<dbReference type="InterPro" id="IPR037198">
    <property type="entry name" value="MutL_C_sf"/>
</dbReference>
<dbReference type="InterPro" id="IPR020568">
    <property type="entry name" value="Ribosomal_Su5_D2-typ_SF"/>
</dbReference>
<dbReference type="InterPro" id="IPR014721">
    <property type="entry name" value="Ribsml_uS5_D2-typ_fold_subgr"/>
</dbReference>
<dbReference type="NCBIfam" id="TIGR00585">
    <property type="entry name" value="mutl"/>
    <property type="match status" value="1"/>
</dbReference>
<dbReference type="NCBIfam" id="NF000952">
    <property type="entry name" value="PRK00095.2-2"/>
    <property type="match status" value="1"/>
</dbReference>
<dbReference type="NCBIfam" id="NF000953">
    <property type="entry name" value="PRK00095.2-4"/>
    <property type="match status" value="1"/>
</dbReference>
<dbReference type="PANTHER" id="PTHR10073">
    <property type="entry name" value="DNA MISMATCH REPAIR PROTEIN MLH, PMS, MUTL"/>
    <property type="match status" value="1"/>
</dbReference>
<dbReference type="PANTHER" id="PTHR10073:SF12">
    <property type="entry name" value="DNA MISMATCH REPAIR PROTEIN MLH1"/>
    <property type="match status" value="1"/>
</dbReference>
<dbReference type="Pfam" id="PF01119">
    <property type="entry name" value="DNA_mis_repair"/>
    <property type="match status" value="1"/>
</dbReference>
<dbReference type="Pfam" id="PF13589">
    <property type="entry name" value="HATPase_c_3"/>
    <property type="match status" value="1"/>
</dbReference>
<dbReference type="Pfam" id="PF08676">
    <property type="entry name" value="MutL_C"/>
    <property type="match status" value="1"/>
</dbReference>
<dbReference type="SMART" id="SM01340">
    <property type="entry name" value="DNA_mis_repair"/>
    <property type="match status" value="1"/>
</dbReference>
<dbReference type="SMART" id="SM00853">
    <property type="entry name" value="MutL_C"/>
    <property type="match status" value="1"/>
</dbReference>
<dbReference type="SUPFAM" id="SSF55874">
    <property type="entry name" value="ATPase domain of HSP90 chaperone/DNA topoisomerase II/histidine kinase"/>
    <property type="match status" value="1"/>
</dbReference>
<dbReference type="SUPFAM" id="SSF118116">
    <property type="entry name" value="DNA mismatch repair protein MutL"/>
    <property type="match status" value="1"/>
</dbReference>
<dbReference type="SUPFAM" id="SSF54211">
    <property type="entry name" value="Ribosomal protein S5 domain 2-like"/>
    <property type="match status" value="1"/>
</dbReference>
<dbReference type="PROSITE" id="PS00058">
    <property type="entry name" value="DNA_MISMATCH_REPAIR_1"/>
    <property type="match status" value="1"/>
</dbReference>
<evidence type="ECO:0000255" key="1">
    <source>
        <dbReference type="HAMAP-Rule" id="MF_00149"/>
    </source>
</evidence>
<keyword id="KW-0227">DNA damage</keyword>
<keyword id="KW-0234">DNA repair</keyword>
<accession>Q1RGP6</accession>
<comment type="function">
    <text evidence="1">This protein is involved in the repair of mismatches in DNA. It is required for dam-dependent methyl-directed DNA mismatch repair. May act as a 'molecular matchmaker', a protein that promotes the formation of a stable complex between two or more DNA-binding proteins in an ATP-dependent manner without itself being part of a final effector complex.</text>
</comment>
<comment type="similarity">
    <text evidence="1">Belongs to the DNA mismatch repair MutL/HexB family.</text>
</comment>
<gene>
    <name evidence="1" type="primary">mutL</name>
    <name type="ordered locus">RBE_1387</name>
</gene>
<feature type="chain" id="PRO_0000274889" description="DNA mismatch repair protein MutL">
    <location>
        <begin position="1"/>
        <end position="611"/>
    </location>
</feature>
<reference key="1">
    <citation type="journal article" date="2006" name="PLoS Genet.">
        <title>Genome sequence of Rickettsia bellii illuminates the role of amoebae in gene exchanges between intracellular pathogens.</title>
        <authorList>
            <person name="Ogata H."/>
            <person name="La Scola B."/>
            <person name="Audic S."/>
            <person name="Renesto P."/>
            <person name="Blanc G."/>
            <person name="Robert C."/>
            <person name="Fournier P.-E."/>
            <person name="Claverie J.-M."/>
            <person name="Raoult D."/>
        </authorList>
    </citation>
    <scope>NUCLEOTIDE SEQUENCE [LARGE SCALE GENOMIC DNA]</scope>
    <source>
        <strain>RML369-C</strain>
    </source>
</reference>
<name>MUTL_RICBR</name>
<protein>
    <recommendedName>
        <fullName evidence="1">DNA mismatch repair protein MutL</fullName>
    </recommendedName>
</protein>
<sequence>MTIKLLSESTINRIAAGEVIERPASVVKELVENAVDAGSTKIDIILERAGKNLIIISDDGVGMTDKELEIAVERHTTSKLDETDFLNIHTFGFRGEALPSIAAISKMLITSKKRDNQKAFQIKLIGGDEKQIAPAIHNEGTKIEIRDLFFATPARLKFLRTDKTELAATVDVVKKIALAHPEISFSLTHDGKTLLKLKGQNKDAENNLKQRIIDVIGEDFIKNASYIDFKSPDFSIYGYTSIPTYNRASSEDQFLFINNRPVKDKLLQVALRVAYQDYMPRDRYPLCAIFLQIDPQLVDVNVHPAKAEVRFHDPNYVRNLLIDSIKNALSNKSHIASTTIASSAIELFKNPFVNKEPAISKPLNVNSKPSEYRPATSPTVPKYTPNNSCQKLIDTLPHARIEQEVEQRIQNEPQKSSQYRLGAAKAQLHTTYVISQTEDSIVITDQHAAHERLGYEKIKNYIKNEELIKQRLLIPEIVELPDEKRADILYENKDKLSKLGLSLEKFGEKSIIVTEIPNILGDINVQKLIQDLADHLAECGENIALTELIEHVTETYACHYSIRAGRKLSADEMNALLRQMENTPFSGQCNHGRPTYIELKLKDIERLFGRK</sequence>
<organism>
    <name type="scientific">Rickettsia bellii (strain RML369-C)</name>
    <dbReference type="NCBI Taxonomy" id="336407"/>
    <lineage>
        <taxon>Bacteria</taxon>
        <taxon>Pseudomonadati</taxon>
        <taxon>Pseudomonadota</taxon>
        <taxon>Alphaproteobacteria</taxon>
        <taxon>Rickettsiales</taxon>
        <taxon>Rickettsiaceae</taxon>
        <taxon>Rickettsieae</taxon>
        <taxon>Rickettsia</taxon>
        <taxon>belli group</taxon>
    </lineage>
</organism>
<proteinExistence type="inferred from homology"/>